<comment type="subcellular location">
    <subcellularLocation>
        <location evidence="2">Cell membrane</location>
        <topology evidence="2">Multi-pass membrane protein</topology>
    </subcellularLocation>
</comment>
<evidence type="ECO:0000255" key="1"/>
<evidence type="ECO:0000305" key="2"/>
<organism>
    <name type="scientific">Archaeoglobus fulgidus (strain ATCC 49558 / DSM 4304 / JCM 9628 / NBRC 100126 / VC-16)</name>
    <dbReference type="NCBI Taxonomy" id="224325"/>
    <lineage>
        <taxon>Archaea</taxon>
        <taxon>Methanobacteriati</taxon>
        <taxon>Methanobacteriota</taxon>
        <taxon>Archaeoglobi</taxon>
        <taxon>Archaeoglobales</taxon>
        <taxon>Archaeoglobaceae</taxon>
        <taxon>Archaeoglobus</taxon>
    </lineage>
</organism>
<accession>O28147</accession>
<dbReference type="EMBL" id="AE000782">
    <property type="protein sequence ID" value="AAB89127.1"/>
    <property type="molecule type" value="Genomic_DNA"/>
</dbReference>
<dbReference type="PIR" id="E69516">
    <property type="entry name" value="E69516"/>
</dbReference>
<dbReference type="RefSeq" id="WP_010879624.1">
    <property type="nucleotide sequence ID" value="NC_000917.1"/>
</dbReference>
<dbReference type="SMR" id="O28147"/>
<dbReference type="STRING" id="224325.AF_2133"/>
<dbReference type="PaxDb" id="224325-AF_2133"/>
<dbReference type="DNASU" id="1485362"/>
<dbReference type="EnsemblBacteria" id="AAB89127">
    <property type="protein sequence ID" value="AAB89127"/>
    <property type="gene ID" value="AF_2133"/>
</dbReference>
<dbReference type="KEGG" id="afu:AF_2133"/>
<dbReference type="HOGENOM" id="CLU_971815_0_0_2"/>
<dbReference type="Proteomes" id="UP000002199">
    <property type="component" value="Chromosome"/>
</dbReference>
<dbReference type="GO" id="GO:0005886">
    <property type="term" value="C:plasma membrane"/>
    <property type="evidence" value="ECO:0007669"/>
    <property type="project" value="UniProtKB-SubCell"/>
</dbReference>
<reference key="1">
    <citation type="journal article" date="1997" name="Nature">
        <title>The complete genome sequence of the hyperthermophilic, sulphate-reducing archaeon Archaeoglobus fulgidus.</title>
        <authorList>
            <person name="Klenk H.-P."/>
            <person name="Clayton R.A."/>
            <person name="Tomb J.-F."/>
            <person name="White O."/>
            <person name="Nelson K.E."/>
            <person name="Ketchum K.A."/>
            <person name="Dodson R.J."/>
            <person name="Gwinn M.L."/>
            <person name="Hickey E.K."/>
            <person name="Peterson J.D."/>
            <person name="Richardson D.L."/>
            <person name="Kerlavage A.R."/>
            <person name="Graham D.E."/>
            <person name="Kyrpides N.C."/>
            <person name="Fleischmann R.D."/>
            <person name="Quackenbush J."/>
            <person name="Lee N.H."/>
            <person name="Sutton G.G."/>
            <person name="Gill S.R."/>
            <person name="Kirkness E.F."/>
            <person name="Dougherty B.A."/>
            <person name="McKenney K."/>
            <person name="Adams M.D."/>
            <person name="Loftus B.J."/>
            <person name="Peterson S.N."/>
            <person name="Reich C.I."/>
            <person name="McNeil L.K."/>
            <person name="Badger J.H."/>
            <person name="Glodek A."/>
            <person name="Zhou L."/>
            <person name="Overbeek R."/>
            <person name="Gocayne J.D."/>
            <person name="Weidman J.F."/>
            <person name="McDonald L.A."/>
            <person name="Utterback T.R."/>
            <person name="Cotton M.D."/>
            <person name="Spriggs T."/>
            <person name="Artiach P."/>
            <person name="Kaine B.P."/>
            <person name="Sykes S.M."/>
            <person name="Sadow P.W."/>
            <person name="D'Andrea K.P."/>
            <person name="Bowman C."/>
            <person name="Fujii C."/>
            <person name="Garland S.A."/>
            <person name="Mason T.M."/>
            <person name="Olsen G.J."/>
            <person name="Fraser C.M."/>
            <person name="Smith H.O."/>
            <person name="Woese C.R."/>
            <person name="Venter J.C."/>
        </authorList>
    </citation>
    <scope>NUCLEOTIDE SEQUENCE [LARGE SCALE GENOMIC DNA]</scope>
    <source>
        <strain>ATCC 49558 / DSM 4304 / JCM 9628 / NBRC 100126 / VC-16</strain>
    </source>
</reference>
<proteinExistence type="predicted"/>
<gene>
    <name type="ordered locus">AF_2133</name>
</gene>
<name>Y2133_ARCFU</name>
<protein>
    <recommendedName>
        <fullName>Uncharacterized protein AF_2133</fullName>
    </recommendedName>
</protein>
<feature type="chain" id="PRO_0000128100" description="Uncharacterized protein AF_2133">
    <location>
        <begin position="1"/>
        <end position="286"/>
    </location>
</feature>
<feature type="transmembrane region" description="Helical" evidence="1">
    <location>
        <begin position="52"/>
        <end position="74"/>
    </location>
</feature>
<feature type="transmembrane region" description="Helical" evidence="1">
    <location>
        <begin position="79"/>
        <end position="101"/>
    </location>
</feature>
<feature type="transmembrane region" description="Helical" evidence="1">
    <location>
        <begin position="142"/>
        <end position="161"/>
    </location>
</feature>
<feature type="transmembrane region" description="Helical" evidence="1">
    <location>
        <begin position="168"/>
        <end position="190"/>
    </location>
</feature>
<feature type="transmembrane region" description="Helical" evidence="1">
    <location>
        <begin position="203"/>
        <end position="225"/>
    </location>
</feature>
<feature type="transmembrane region" description="Helical" evidence="1">
    <location>
        <begin position="257"/>
        <end position="276"/>
    </location>
</feature>
<keyword id="KW-1003">Cell membrane</keyword>
<keyword id="KW-0472">Membrane</keyword>
<keyword id="KW-1185">Reference proteome</keyword>
<keyword id="KW-0812">Transmembrane</keyword>
<keyword id="KW-1133">Transmembrane helix</keyword>
<sequence length="286" mass="32255">MLIALLLISYQLIKHGYRAADIKNLYTILEGEELRRQKDLSAKLRWGIVDEILWTIIVANGAILFTAHYVLIGLKILDLIAIFVVMLSGVMLYAPLAFLFLYPVVRAFEKNFPPSNPQFLLSHGLICTVSSLIVYEKLEQLWWDPLLVGFFWIAAGFVSFFTNRRFEVLVFLLLIAPLALLSVKCPGAILPILLAKSECSLRIQATFLVKLAVLIFASLAAVALVLQVFGYKSLRELSEKRKAAIKQGKYNPLRDPIIWIAWIMLTSLGLLIASFMERGEISPNML</sequence>